<reference key="1">
    <citation type="journal article" date="2004" name="Nat. Biotechnol.">
        <title>The genome sequence of the capnophilic rumen bacterium Mannheimia succiniciproducens.</title>
        <authorList>
            <person name="Hong S.H."/>
            <person name="Kim J.S."/>
            <person name="Lee S.Y."/>
            <person name="In Y.H."/>
            <person name="Choi S.S."/>
            <person name="Rih J.-K."/>
            <person name="Kim C.H."/>
            <person name="Jeong H."/>
            <person name="Hur C.G."/>
            <person name="Kim J.J."/>
        </authorList>
    </citation>
    <scope>NUCLEOTIDE SEQUENCE [LARGE SCALE GENOMIC DNA]</scope>
    <source>
        <strain>KCTC 0769BP / MBEL55E</strain>
    </source>
</reference>
<feature type="chain" id="PRO_0000238821" description="Cytochrome c-type biogenesis protein CcmE">
    <location>
        <begin position="1"/>
        <end position="179"/>
    </location>
</feature>
<feature type="topological domain" description="Cytoplasmic" evidence="1">
    <location>
        <begin position="1"/>
        <end position="8"/>
    </location>
</feature>
<feature type="transmembrane region" description="Helical; Signal-anchor for type II membrane protein" evidence="1">
    <location>
        <begin position="9"/>
        <end position="29"/>
    </location>
</feature>
<feature type="topological domain" description="Periplasmic" evidence="1">
    <location>
        <begin position="30"/>
        <end position="179"/>
    </location>
</feature>
<feature type="region of interest" description="Disordered" evidence="2">
    <location>
        <begin position="138"/>
        <end position="179"/>
    </location>
</feature>
<feature type="compositionally biased region" description="Basic and acidic residues" evidence="2">
    <location>
        <begin position="138"/>
        <end position="148"/>
    </location>
</feature>
<feature type="compositionally biased region" description="Basic and acidic residues" evidence="2">
    <location>
        <begin position="161"/>
        <end position="179"/>
    </location>
</feature>
<feature type="binding site" description="covalent" evidence="1">
    <location>
        <position position="131"/>
    </location>
    <ligand>
        <name>heme</name>
        <dbReference type="ChEBI" id="CHEBI:30413"/>
    </ligand>
</feature>
<feature type="binding site" description="axial binding residue" evidence="1">
    <location>
        <position position="135"/>
    </location>
    <ligand>
        <name>heme</name>
        <dbReference type="ChEBI" id="CHEBI:30413"/>
    </ligand>
    <ligandPart>
        <name>Fe</name>
        <dbReference type="ChEBI" id="CHEBI:18248"/>
    </ligandPart>
</feature>
<keyword id="KW-0997">Cell inner membrane</keyword>
<keyword id="KW-1003">Cell membrane</keyword>
<keyword id="KW-0201">Cytochrome c-type biogenesis</keyword>
<keyword id="KW-0349">Heme</keyword>
<keyword id="KW-0408">Iron</keyword>
<keyword id="KW-0472">Membrane</keyword>
<keyword id="KW-0479">Metal-binding</keyword>
<keyword id="KW-0735">Signal-anchor</keyword>
<keyword id="KW-0812">Transmembrane</keyword>
<keyword id="KW-1133">Transmembrane helix</keyword>
<evidence type="ECO:0000255" key="1">
    <source>
        <dbReference type="HAMAP-Rule" id="MF_01959"/>
    </source>
</evidence>
<evidence type="ECO:0000256" key="2">
    <source>
        <dbReference type="SAM" id="MobiDB-lite"/>
    </source>
</evidence>
<dbReference type="EMBL" id="AE016827">
    <property type="protein sequence ID" value="AAU37212.1"/>
    <property type="molecule type" value="Genomic_DNA"/>
</dbReference>
<dbReference type="RefSeq" id="WP_011199784.1">
    <property type="nucleotide sequence ID" value="NC_006300.1"/>
</dbReference>
<dbReference type="SMR" id="Q65UZ8"/>
<dbReference type="STRING" id="221988.MS0605"/>
<dbReference type="KEGG" id="msu:MS0605"/>
<dbReference type="eggNOG" id="COG2332">
    <property type="taxonomic scope" value="Bacteria"/>
</dbReference>
<dbReference type="HOGENOM" id="CLU_079503_1_0_6"/>
<dbReference type="OrthoDB" id="9793584at2"/>
<dbReference type="Proteomes" id="UP000000607">
    <property type="component" value="Chromosome"/>
</dbReference>
<dbReference type="GO" id="GO:0005886">
    <property type="term" value="C:plasma membrane"/>
    <property type="evidence" value="ECO:0007669"/>
    <property type="project" value="UniProtKB-SubCell"/>
</dbReference>
<dbReference type="GO" id="GO:0020037">
    <property type="term" value="F:heme binding"/>
    <property type="evidence" value="ECO:0007669"/>
    <property type="project" value="InterPro"/>
</dbReference>
<dbReference type="GO" id="GO:0046872">
    <property type="term" value="F:metal ion binding"/>
    <property type="evidence" value="ECO:0007669"/>
    <property type="project" value="UniProtKB-KW"/>
</dbReference>
<dbReference type="GO" id="GO:0017004">
    <property type="term" value="P:cytochrome complex assembly"/>
    <property type="evidence" value="ECO:0007669"/>
    <property type="project" value="UniProtKB-KW"/>
</dbReference>
<dbReference type="FunFam" id="2.40.50.140:FF:000104">
    <property type="entry name" value="Cytochrome c-type biogenesis protein CcmE"/>
    <property type="match status" value="1"/>
</dbReference>
<dbReference type="Gene3D" id="2.40.50.140">
    <property type="entry name" value="Nucleic acid-binding proteins"/>
    <property type="match status" value="1"/>
</dbReference>
<dbReference type="HAMAP" id="MF_01959">
    <property type="entry name" value="CcmE"/>
    <property type="match status" value="1"/>
</dbReference>
<dbReference type="InterPro" id="IPR004329">
    <property type="entry name" value="CcmE"/>
</dbReference>
<dbReference type="InterPro" id="IPR036127">
    <property type="entry name" value="CcmE-like_sf"/>
</dbReference>
<dbReference type="InterPro" id="IPR012340">
    <property type="entry name" value="NA-bd_OB-fold"/>
</dbReference>
<dbReference type="NCBIfam" id="NF009638">
    <property type="entry name" value="PRK13165.1"/>
    <property type="match status" value="1"/>
</dbReference>
<dbReference type="NCBIfam" id="NF009727">
    <property type="entry name" value="PRK13254.1-1"/>
    <property type="match status" value="1"/>
</dbReference>
<dbReference type="NCBIfam" id="NF009729">
    <property type="entry name" value="PRK13254.1-3"/>
    <property type="match status" value="1"/>
</dbReference>
<dbReference type="PANTHER" id="PTHR34128">
    <property type="entry name" value="CYTOCHROME C-TYPE BIOGENESIS PROTEIN CCME HOMOLOG, MITOCHONDRIAL"/>
    <property type="match status" value="1"/>
</dbReference>
<dbReference type="PANTHER" id="PTHR34128:SF2">
    <property type="entry name" value="CYTOCHROME C-TYPE BIOGENESIS PROTEIN CCME HOMOLOG, MITOCHONDRIAL"/>
    <property type="match status" value="1"/>
</dbReference>
<dbReference type="Pfam" id="PF03100">
    <property type="entry name" value="CcmE"/>
    <property type="match status" value="1"/>
</dbReference>
<dbReference type="SUPFAM" id="SSF82093">
    <property type="entry name" value="Heme chaperone CcmE"/>
    <property type="match status" value="1"/>
</dbReference>
<organism>
    <name type="scientific">Mannheimia succiniciproducens (strain KCTC 0769BP / MBEL55E)</name>
    <dbReference type="NCBI Taxonomy" id="221988"/>
    <lineage>
        <taxon>Bacteria</taxon>
        <taxon>Pseudomonadati</taxon>
        <taxon>Pseudomonadota</taxon>
        <taxon>Gammaproteobacteria</taxon>
        <taxon>Pasteurellales</taxon>
        <taxon>Pasteurellaceae</taxon>
        <taxon>Basfia</taxon>
    </lineage>
</organism>
<accession>Q65UZ8</accession>
<comment type="function">
    <text evidence="1">Heme chaperone required for the biogenesis of c-type cytochromes. Transiently binds heme delivered by CcmC and transfers the heme to apo-cytochromes in a process facilitated by CcmF and CcmH.</text>
</comment>
<comment type="subcellular location">
    <subcellularLocation>
        <location evidence="1">Cell inner membrane</location>
        <topology evidence="1">Single-pass type II membrane protein</topology>
        <orientation evidence="1">Periplasmic side</orientation>
    </subcellularLocation>
</comment>
<comment type="similarity">
    <text evidence="1">Belongs to the CcmE/CycJ family.</text>
</comment>
<gene>
    <name evidence="1" type="primary">ccmE</name>
    <name evidence="1" type="synonym">cycJ</name>
    <name type="ordered locus">MS0605</name>
</gene>
<name>CCME_MANSM</name>
<protein>
    <recommendedName>
        <fullName evidence="1">Cytochrome c-type biogenesis protein CcmE</fullName>
    </recommendedName>
    <alternativeName>
        <fullName evidence="1">Cytochrome c maturation protein E</fullName>
    </alternativeName>
    <alternativeName>
        <fullName evidence="1">Heme chaperone CcmE</fullName>
    </alternativeName>
</protein>
<proteinExistence type="inferred from homology"/>
<sequence>MNPRRKSRLTIILFVLLGVTIASSLVLYALRQNIDLFYTPSEVISGKNDDPDTIPEVGQRIRVGGMVVEGTVKRDPNSLKVSFNVNDIGPEITVEYEGILPDLFREGQGIVAQGVLKEPKLLEATEVLAKHDENYVPPDLSEKMEQVHKPMGISNQDMQGESDRDRLDKAVNSVEEGKK</sequence>